<dbReference type="EMBL" id="AL590842">
    <property type="protein sequence ID" value="CAL22303.1"/>
    <property type="status" value="ALT_INIT"/>
    <property type="molecule type" value="Genomic_DNA"/>
</dbReference>
<dbReference type="EMBL" id="AE009952">
    <property type="protein sequence ID" value="AAM83621.1"/>
    <property type="molecule type" value="Genomic_DNA"/>
</dbReference>
<dbReference type="EMBL" id="AE017042">
    <property type="protein sequence ID" value="AAS63249.1"/>
    <property type="molecule type" value="Genomic_DNA"/>
</dbReference>
<dbReference type="PIR" id="AD0452">
    <property type="entry name" value="AD0452"/>
</dbReference>
<dbReference type="RefSeq" id="YP_002348597.1">
    <property type="nucleotide sequence ID" value="NC_003143.1"/>
</dbReference>
<dbReference type="SMR" id="Q74RF8"/>
<dbReference type="STRING" id="214092.YPO3716"/>
<dbReference type="PaxDb" id="214092-YPO3716"/>
<dbReference type="DNASU" id="1144973"/>
<dbReference type="EnsemblBacteria" id="AAS63249">
    <property type="protein sequence ID" value="AAS63249"/>
    <property type="gene ID" value="YP_3078"/>
</dbReference>
<dbReference type="KEGG" id="ype:YPO3716"/>
<dbReference type="KEGG" id="ypk:y0026"/>
<dbReference type="KEGG" id="ypm:YP_3078"/>
<dbReference type="PATRIC" id="fig|214092.21.peg.4226"/>
<dbReference type="eggNOG" id="COG3833">
    <property type="taxonomic scope" value="Bacteria"/>
</dbReference>
<dbReference type="HOGENOM" id="CLU_016047_1_2_6"/>
<dbReference type="Proteomes" id="UP000000815">
    <property type="component" value="Chromosome"/>
</dbReference>
<dbReference type="Proteomes" id="UP000001019">
    <property type="component" value="Chromosome"/>
</dbReference>
<dbReference type="Proteomes" id="UP000002490">
    <property type="component" value="Chromosome"/>
</dbReference>
<dbReference type="GO" id="GO:0005886">
    <property type="term" value="C:plasma membrane"/>
    <property type="evidence" value="ECO:0007669"/>
    <property type="project" value="UniProtKB-SubCell"/>
</dbReference>
<dbReference type="GO" id="GO:0015423">
    <property type="term" value="F:ABC-type maltose transporter activity"/>
    <property type="evidence" value="ECO:0000318"/>
    <property type="project" value="GO_Central"/>
</dbReference>
<dbReference type="GO" id="GO:0042956">
    <property type="term" value="P:maltodextrin transmembrane transport"/>
    <property type="evidence" value="ECO:0000318"/>
    <property type="project" value="GO_Central"/>
</dbReference>
<dbReference type="GO" id="GO:0015768">
    <property type="term" value="P:maltose transport"/>
    <property type="evidence" value="ECO:0000318"/>
    <property type="project" value="GO_Central"/>
</dbReference>
<dbReference type="CDD" id="cd06261">
    <property type="entry name" value="TM_PBP2"/>
    <property type="match status" value="1"/>
</dbReference>
<dbReference type="FunFam" id="1.10.3720.10:FF:000010">
    <property type="entry name" value="Maltose ABC transporter permease MalG"/>
    <property type="match status" value="1"/>
</dbReference>
<dbReference type="Gene3D" id="1.10.3720.10">
    <property type="entry name" value="MetI-like"/>
    <property type="match status" value="1"/>
</dbReference>
<dbReference type="InterPro" id="IPR050901">
    <property type="entry name" value="BP-dep_ABC_trans_perm"/>
</dbReference>
<dbReference type="InterPro" id="IPR000515">
    <property type="entry name" value="MetI-like"/>
</dbReference>
<dbReference type="InterPro" id="IPR035906">
    <property type="entry name" value="MetI-like_sf"/>
</dbReference>
<dbReference type="NCBIfam" id="NF008231">
    <property type="entry name" value="PRK10998.1"/>
    <property type="match status" value="1"/>
</dbReference>
<dbReference type="PANTHER" id="PTHR32243">
    <property type="entry name" value="MALTOSE TRANSPORT SYSTEM PERMEASE-RELATED"/>
    <property type="match status" value="1"/>
</dbReference>
<dbReference type="PANTHER" id="PTHR32243:SF50">
    <property type="entry name" value="MALTOSE_MALTODEXTRIN TRANSPORT SYSTEM PERMEASE PROTEIN MALG"/>
    <property type="match status" value="1"/>
</dbReference>
<dbReference type="Pfam" id="PF00528">
    <property type="entry name" value="BPD_transp_1"/>
    <property type="match status" value="1"/>
</dbReference>
<dbReference type="SUPFAM" id="SSF161098">
    <property type="entry name" value="MetI-like"/>
    <property type="match status" value="1"/>
</dbReference>
<dbReference type="PROSITE" id="PS50928">
    <property type="entry name" value="ABC_TM1"/>
    <property type="match status" value="1"/>
</dbReference>
<comment type="function">
    <text evidence="1">Part of the ABC transporter complex MalEFGK involved in maltose/maltodextrin import. Probably responsible for the translocation of the substrate across the membrane.</text>
</comment>
<comment type="subunit">
    <text evidence="1">The complex is composed of two ATP-binding proteins (MalK), two transmembrane proteins (MalG and MalF) and a solute-binding protein (MalE).</text>
</comment>
<comment type="subcellular location">
    <subcellularLocation>
        <location evidence="1">Cell inner membrane</location>
        <topology evidence="1">Multi-pass membrane protein</topology>
    </subcellularLocation>
</comment>
<comment type="similarity">
    <text evidence="4">Belongs to the binding-protein-dependent transport system permease family. MalFG subfamily.</text>
</comment>
<comment type="sequence caution" evidence="4">
    <conflict type="erroneous initiation">
        <sequence resource="EMBL-CDS" id="CAL22303"/>
    </conflict>
</comment>
<sequence>MTKEEMQMAMVQPKSQRLRLLGTHFLMLCFIALIMFPLLMVIAISLRPGNFATGSLIPDQISWEHWKLALGMSVTHADGSVTPPPFPVMLWLWNSIKIALITAMGIVALSTTCAYAFARMRFRGKSALLKGMLIFQMFPAVLSLVALYALFDRIGQYMPFIGLNTHGGVIFAYMGGIALHVWTIKGYFETIDNSLEEAAALDGATPWQAFRLVLLPLSVPILAVVFILSFIAAITEVPVASLLLRDVNSYTLAVGMQQYLNPQNYLWGDFAAAAVLSAIPITTVFLLAQRWLVGGLTAGGVKG</sequence>
<protein>
    <recommendedName>
        <fullName evidence="1">Maltose/maltodextrin transport system permease protein MalG</fullName>
    </recommendedName>
</protein>
<evidence type="ECO:0000250" key="1">
    <source>
        <dbReference type="UniProtKB" id="P68183"/>
    </source>
</evidence>
<evidence type="ECO:0000255" key="2"/>
<evidence type="ECO:0000255" key="3">
    <source>
        <dbReference type="PROSITE-ProRule" id="PRU00441"/>
    </source>
</evidence>
<evidence type="ECO:0000305" key="4"/>
<organism>
    <name type="scientific">Yersinia pestis</name>
    <dbReference type="NCBI Taxonomy" id="632"/>
    <lineage>
        <taxon>Bacteria</taxon>
        <taxon>Pseudomonadati</taxon>
        <taxon>Pseudomonadota</taxon>
        <taxon>Gammaproteobacteria</taxon>
        <taxon>Enterobacterales</taxon>
        <taxon>Yersiniaceae</taxon>
        <taxon>Yersinia</taxon>
    </lineage>
</organism>
<feature type="chain" id="PRO_0000060093" description="Maltose/maltodextrin transport system permease protein MalG">
    <location>
        <begin position="1"/>
        <end position="303"/>
    </location>
</feature>
<feature type="topological domain" description="Cytoplasmic" evidence="2">
    <location>
        <begin position="1"/>
        <end position="19"/>
    </location>
</feature>
<feature type="transmembrane region" description="Helical" evidence="3">
    <location>
        <begin position="20"/>
        <end position="42"/>
    </location>
</feature>
<feature type="topological domain" description="Periplasmic" evidence="2">
    <location>
        <begin position="43"/>
        <end position="95"/>
    </location>
</feature>
<feature type="transmembrane region" description="Helical" evidence="3">
    <location>
        <begin position="96"/>
        <end position="118"/>
    </location>
</feature>
<feature type="topological domain" description="Cytoplasmic" evidence="2">
    <location>
        <begin position="119"/>
        <end position="130"/>
    </location>
</feature>
<feature type="transmembrane region" description="Helical" evidence="3">
    <location>
        <begin position="131"/>
        <end position="150"/>
    </location>
</feature>
<feature type="topological domain" description="Periplasmic" evidence="2">
    <location>
        <begin position="151"/>
        <end position="159"/>
    </location>
</feature>
<feature type="transmembrane region" description="Helical" evidence="3">
    <location>
        <begin position="160"/>
        <end position="182"/>
    </location>
</feature>
<feature type="topological domain" description="Cytoplasmic" evidence="2">
    <location>
        <begin position="183"/>
        <end position="211"/>
    </location>
</feature>
<feature type="transmembrane region" description="Helical" evidence="3">
    <location>
        <begin position="212"/>
        <end position="234"/>
    </location>
</feature>
<feature type="topological domain" description="Periplasmic" evidence="2">
    <location>
        <begin position="235"/>
        <end position="265"/>
    </location>
</feature>
<feature type="transmembrane region" description="Helical" evidence="3">
    <location>
        <begin position="266"/>
        <end position="288"/>
    </location>
</feature>
<feature type="topological domain" description="Cytoplasmic" evidence="2">
    <location>
        <begin position="289"/>
        <end position="303"/>
    </location>
</feature>
<feature type="domain" description="ABC transmembrane type-1" evidence="3">
    <location>
        <begin position="92"/>
        <end position="288"/>
    </location>
</feature>
<gene>
    <name type="primary">malG</name>
    <name type="ordered locus">YPO3716</name>
    <name type="ordered locus">y0026</name>
    <name type="ordered locus">YP_3078</name>
</gene>
<reference key="1">
    <citation type="journal article" date="2001" name="Nature">
        <title>Genome sequence of Yersinia pestis, the causative agent of plague.</title>
        <authorList>
            <person name="Parkhill J."/>
            <person name="Wren B.W."/>
            <person name="Thomson N.R."/>
            <person name="Titball R.W."/>
            <person name="Holden M.T.G."/>
            <person name="Prentice M.B."/>
            <person name="Sebaihia M."/>
            <person name="James K.D."/>
            <person name="Churcher C.M."/>
            <person name="Mungall K.L."/>
            <person name="Baker S."/>
            <person name="Basham D."/>
            <person name="Bentley S.D."/>
            <person name="Brooks K."/>
            <person name="Cerdeno-Tarraga A.-M."/>
            <person name="Chillingworth T."/>
            <person name="Cronin A."/>
            <person name="Davies R.M."/>
            <person name="Davis P."/>
            <person name="Dougan G."/>
            <person name="Feltwell T."/>
            <person name="Hamlin N."/>
            <person name="Holroyd S."/>
            <person name="Jagels K."/>
            <person name="Karlyshev A.V."/>
            <person name="Leather S."/>
            <person name="Moule S."/>
            <person name="Oyston P.C.F."/>
            <person name="Quail M.A."/>
            <person name="Rutherford K.M."/>
            <person name="Simmonds M."/>
            <person name="Skelton J."/>
            <person name="Stevens K."/>
            <person name="Whitehead S."/>
            <person name="Barrell B.G."/>
        </authorList>
    </citation>
    <scope>NUCLEOTIDE SEQUENCE [LARGE SCALE GENOMIC DNA]</scope>
    <source>
        <strain>CO-92 / Biovar Orientalis</strain>
    </source>
</reference>
<reference key="2">
    <citation type="journal article" date="2002" name="J. Bacteriol.">
        <title>Genome sequence of Yersinia pestis KIM.</title>
        <authorList>
            <person name="Deng W."/>
            <person name="Burland V."/>
            <person name="Plunkett G. III"/>
            <person name="Boutin A."/>
            <person name="Mayhew G.F."/>
            <person name="Liss P."/>
            <person name="Perna N.T."/>
            <person name="Rose D.J."/>
            <person name="Mau B."/>
            <person name="Zhou S."/>
            <person name="Schwartz D.C."/>
            <person name="Fetherston J.D."/>
            <person name="Lindler L.E."/>
            <person name="Brubaker R.R."/>
            <person name="Plano G.V."/>
            <person name="Straley S.C."/>
            <person name="McDonough K.A."/>
            <person name="Nilles M.L."/>
            <person name="Matson J.S."/>
            <person name="Blattner F.R."/>
            <person name="Perry R.D."/>
        </authorList>
    </citation>
    <scope>NUCLEOTIDE SEQUENCE [LARGE SCALE GENOMIC DNA]</scope>
    <source>
        <strain>KIM10+ / Biovar Mediaevalis</strain>
    </source>
</reference>
<reference key="3">
    <citation type="journal article" date="2004" name="DNA Res.">
        <title>Complete genome sequence of Yersinia pestis strain 91001, an isolate avirulent to humans.</title>
        <authorList>
            <person name="Song Y."/>
            <person name="Tong Z."/>
            <person name="Wang J."/>
            <person name="Wang L."/>
            <person name="Guo Z."/>
            <person name="Han Y."/>
            <person name="Zhang J."/>
            <person name="Pei D."/>
            <person name="Zhou D."/>
            <person name="Qin H."/>
            <person name="Pang X."/>
            <person name="Han Y."/>
            <person name="Zhai J."/>
            <person name="Li M."/>
            <person name="Cui B."/>
            <person name="Qi Z."/>
            <person name="Jin L."/>
            <person name="Dai R."/>
            <person name="Chen F."/>
            <person name="Li S."/>
            <person name="Ye C."/>
            <person name="Du Z."/>
            <person name="Lin W."/>
            <person name="Wang J."/>
            <person name="Yu J."/>
            <person name="Yang H."/>
            <person name="Wang J."/>
            <person name="Huang P."/>
            <person name="Yang R."/>
        </authorList>
    </citation>
    <scope>NUCLEOTIDE SEQUENCE [LARGE SCALE GENOMIC DNA]</scope>
    <source>
        <strain>91001 / Biovar Mediaevalis</strain>
    </source>
</reference>
<name>MALG_YERPE</name>
<accession>Q74RF8</accession>
<accession>Q0WAU1</accession>
<accession>Q8D1U1</accession>
<accession>Q8ZAS4</accession>
<keyword id="KW-0997">Cell inner membrane</keyword>
<keyword id="KW-1003">Cell membrane</keyword>
<keyword id="KW-0472">Membrane</keyword>
<keyword id="KW-1185">Reference proteome</keyword>
<keyword id="KW-0762">Sugar transport</keyword>
<keyword id="KW-0812">Transmembrane</keyword>
<keyword id="KW-1133">Transmembrane helix</keyword>
<keyword id="KW-0813">Transport</keyword>
<proteinExistence type="inferred from homology"/>